<proteinExistence type="predicted"/>
<name>300R_IIV6</name>
<accession>Q91FM4</accession>
<feature type="chain" id="PRO_0000377847" description="Transmembrane protein 300R">
    <location>
        <begin position="1"/>
        <end position="61"/>
    </location>
</feature>
<feature type="transmembrane region" description="Helical" evidence="1">
    <location>
        <begin position="5"/>
        <end position="25"/>
    </location>
</feature>
<feature type="transmembrane region" description="Helical" evidence="1">
    <location>
        <begin position="35"/>
        <end position="55"/>
    </location>
</feature>
<gene>
    <name type="ORF">IIV6-300R</name>
</gene>
<comment type="subcellular location">
    <subcellularLocation>
        <location evidence="2">Membrane</location>
        <topology evidence="2">Multi-pass membrane protein</topology>
    </subcellularLocation>
</comment>
<sequence length="61" mass="7069">MKKEFLDLYMILSVLAGVIGIFYLTTPYQDRPDKSLSYYMTLSVVTGILALIYLQNHHKKN</sequence>
<reference key="1">
    <citation type="journal article" date="2001" name="Virology">
        <title>Analysis of the first complete DNA sequence of an invertebrate iridovirus: coding strategy of the genome of Chilo iridescent virus.</title>
        <authorList>
            <person name="Jakob N.J."/>
            <person name="Mueller K."/>
            <person name="Bahr U."/>
            <person name="Darai G."/>
        </authorList>
    </citation>
    <scope>NUCLEOTIDE SEQUENCE [LARGE SCALE GENOMIC DNA]</scope>
</reference>
<reference key="2">
    <citation type="journal article" date="2007" name="Virol. J.">
        <title>Comparative genomic analysis of the family Iridoviridae: re-annotating and defining the core set of iridovirus genes.</title>
        <authorList>
            <person name="Eaton H.E."/>
            <person name="Metcalf J."/>
            <person name="Penny E."/>
            <person name="Tcherepanov V."/>
            <person name="Upton C."/>
            <person name="Brunetti C.R."/>
        </authorList>
    </citation>
    <scope>GENOME REANNOTATION</scope>
</reference>
<dbReference type="EMBL" id="AF303741">
    <property type="protein sequence ID" value="AAK82161.1"/>
    <property type="molecule type" value="Genomic_DNA"/>
</dbReference>
<dbReference type="RefSeq" id="NP_149763.1">
    <property type="nucleotide sequence ID" value="NC_003038.1"/>
</dbReference>
<dbReference type="KEGG" id="vg:1732990"/>
<dbReference type="Proteomes" id="UP000001359">
    <property type="component" value="Genome"/>
</dbReference>
<dbReference type="GO" id="GO:0016020">
    <property type="term" value="C:membrane"/>
    <property type="evidence" value="ECO:0007669"/>
    <property type="project" value="UniProtKB-SubCell"/>
</dbReference>
<organism>
    <name type="scientific">Invertebrate iridescent virus 6</name>
    <name type="common">IIV-6</name>
    <name type="synonym">Chilo iridescent virus</name>
    <dbReference type="NCBI Taxonomy" id="176652"/>
    <lineage>
        <taxon>Viruses</taxon>
        <taxon>Varidnaviria</taxon>
        <taxon>Bamfordvirae</taxon>
        <taxon>Nucleocytoviricota</taxon>
        <taxon>Megaviricetes</taxon>
        <taxon>Pimascovirales</taxon>
        <taxon>Iridoviridae</taxon>
        <taxon>Betairidovirinae</taxon>
        <taxon>Iridovirus</taxon>
    </lineage>
</organism>
<evidence type="ECO:0000255" key="1"/>
<evidence type="ECO:0000305" key="2"/>
<organismHost>
    <name type="scientific">Acheta domesticus</name>
    <name type="common">House cricket</name>
    <dbReference type="NCBI Taxonomy" id="6997"/>
</organismHost>
<organismHost>
    <name type="scientific">Chilo suppressalis</name>
    <name type="common">Asiatic rice borer moth</name>
    <dbReference type="NCBI Taxonomy" id="168631"/>
</organismHost>
<organismHost>
    <name type="scientific">Gryllus bimaculatus</name>
    <name type="common">Two-spotted cricket</name>
    <dbReference type="NCBI Taxonomy" id="6999"/>
</organismHost>
<organismHost>
    <name type="scientific">Gryllus campestris</name>
    <dbReference type="NCBI Taxonomy" id="58607"/>
</organismHost>
<organismHost>
    <name type="scientific">Spodoptera frugiperda</name>
    <name type="common">Fall armyworm</name>
    <dbReference type="NCBI Taxonomy" id="7108"/>
</organismHost>
<protein>
    <recommendedName>
        <fullName>Transmembrane protein 300R</fullName>
    </recommendedName>
</protein>
<keyword id="KW-0472">Membrane</keyword>
<keyword id="KW-1185">Reference proteome</keyword>
<keyword id="KW-0812">Transmembrane</keyword>
<keyword id="KW-1133">Transmembrane helix</keyword>